<gene>
    <name evidence="1" type="primary">rplK</name>
    <name type="ordered locus">OCAR_5659</name>
    <name type="ordered locus">OCA5_c23460</name>
</gene>
<sequence length="142" mass="15265">MAKKVTGYLKLQVPAGAANPSPPIGPALGQRGLNIMEFCKAFNAQTQKIEKNTPIPVVITIYADRSFTFEMKTPPMSFFLKQAAKVQSGSKTPGRDSAGKVTKAQVREIAEKKMKDLNCDTVEAAMKMVEGSARSMGLEVAG</sequence>
<organism>
    <name type="scientific">Afipia carboxidovorans (strain ATCC 49405 / DSM 1227 / KCTC 32145 / OM5)</name>
    <name type="common">Oligotropha carboxidovorans</name>
    <dbReference type="NCBI Taxonomy" id="504832"/>
    <lineage>
        <taxon>Bacteria</taxon>
        <taxon>Pseudomonadati</taxon>
        <taxon>Pseudomonadota</taxon>
        <taxon>Alphaproteobacteria</taxon>
        <taxon>Hyphomicrobiales</taxon>
        <taxon>Nitrobacteraceae</taxon>
        <taxon>Afipia</taxon>
    </lineage>
</organism>
<evidence type="ECO:0000255" key="1">
    <source>
        <dbReference type="HAMAP-Rule" id="MF_00736"/>
    </source>
</evidence>
<evidence type="ECO:0000305" key="2"/>
<protein>
    <recommendedName>
        <fullName evidence="1">Large ribosomal subunit protein uL11</fullName>
    </recommendedName>
    <alternativeName>
        <fullName evidence="2">50S ribosomal protein L11</fullName>
    </alternativeName>
</protein>
<name>RL11_AFIC5</name>
<comment type="function">
    <text evidence="1">Forms part of the ribosomal stalk which helps the ribosome interact with GTP-bound translation factors.</text>
</comment>
<comment type="subunit">
    <text evidence="1">Part of the ribosomal stalk of the 50S ribosomal subunit. Interacts with L10 and the large rRNA to form the base of the stalk. L10 forms an elongated spine to which L12 dimers bind in a sequential fashion forming a multimeric L10(L12)X complex.</text>
</comment>
<comment type="PTM">
    <text evidence="1">One or more lysine residues are methylated.</text>
</comment>
<comment type="similarity">
    <text evidence="1">Belongs to the universal ribosomal protein uL11 family.</text>
</comment>
<reference key="1">
    <citation type="journal article" date="2008" name="J. Bacteriol.">
        <title>Genome sequence of the chemolithoautotrophic bacterium Oligotropha carboxidovorans OM5T.</title>
        <authorList>
            <person name="Paul D."/>
            <person name="Bridges S."/>
            <person name="Burgess S.C."/>
            <person name="Dandass Y."/>
            <person name="Lawrence M.L."/>
        </authorList>
    </citation>
    <scope>NUCLEOTIDE SEQUENCE [LARGE SCALE GENOMIC DNA]</scope>
    <source>
        <strain>ATCC 49405 / DSM 1227 / KCTC 32145 / OM5</strain>
    </source>
</reference>
<reference key="2">
    <citation type="journal article" date="2011" name="J. Bacteriol.">
        <title>Complete genome sequences of the chemolithoautotrophic Oligotropha carboxidovorans strains OM4 and OM5.</title>
        <authorList>
            <person name="Volland S."/>
            <person name="Rachinger M."/>
            <person name="Strittmatter A."/>
            <person name="Daniel R."/>
            <person name="Gottschalk G."/>
            <person name="Meyer O."/>
        </authorList>
    </citation>
    <scope>NUCLEOTIDE SEQUENCE [LARGE SCALE GENOMIC DNA]</scope>
    <source>
        <strain>ATCC 49405 / DSM 1227 / KCTC 32145 / OM5</strain>
    </source>
</reference>
<accession>B6JER5</accession>
<accession>F8BZE3</accession>
<keyword id="KW-0488">Methylation</keyword>
<keyword id="KW-1185">Reference proteome</keyword>
<keyword id="KW-0687">Ribonucleoprotein</keyword>
<keyword id="KW-0689">Ribosomal protein</keyword>
<keyword id="KW-0694">RNA-binding</keyword>
<keyword id="KW-0699">rRNA-binding</keyword>
<feature type="chain" id="PRO_1000195682" description="Large ribosomal subunit protein uL11">
    <location>
        <begin position="1"/>
        <end position="142"/>
    </location>
</feature>
<proteinExistence type="inferred from homology"/>
<dbReference type="EMBL" id="CP001196">
    <property type="protein sequence ID" value="ACI92787.1"/>
    <property type="molecule type" value="Genomic_DNA"/>
</dbReference>
<dbReference type="EMBL" id="CP002826">
    <property type="protein sequence ID" value="AEI07046.1"/>
    <property type="molecule type" value="Genomic_DNA"/>
</dbReference>
<dbReference type="RefSeq" id="WP_012562816.1">
    <property type="nucleotide sequence ID" value="NC_015684.1"/>
</dbReference>
<dbReference type="SMR" id="B6JER5"/>
<dbReference type="STRING" id="504832.OCA5_c23460"/>
<dbReference type="KEGG" id="oca:OCAR_5659"/>
<dbReference type="KEGG" id="ocg:OCA5_c23460"/>
<dbReference type="PATRIC" id="fig|504832.7.peg.2473"/>
<dbReference type="eggNOG" id="COG0080">
    <property type="taxonomic scope" value="Bacteria"/>
</dbReference>
<dbReference type="HOGENOM" id="CLU_074237_2_0_5"/>
<dbReference type="OrthoDB" id="9802408at2"/>
<dbReference type="Proteomes" id="UP000007730">
    <property type="component" value="Chromosome"/>
</dbReference>
<dbReference type="GO" id="GO:0022625">
    <property type="term" value="C:cytosolic large ribosomal subunit"/>
    <property type="evidence" value="ECO:0007669"/>
    <property type="project" value="TreeGrafter"/>
</dbReference>
<dbReference type="GO" id="GO:0070180">
    <property type="term" value="F:large ribosomal subunit rRNA binding"/>
    <property type="evidence" value="ECO:0007669"/>
    <property type="project" value="UniProtKB-UniRule"/>
</dbReference>
<dbReference type="GO" id="GO:0003735">
    <property type="term" value="F:structural constituent of ribosome"/>
    <property type="evidence" value="ECO:0007669"/>
    <property type="project" value="InterPro"/>
</dbReference>
<dbReference type="GO" id="GO:0006412">
    <property type="term" value="P:translation"/>
    <property type="evidence" value="ECO:0007669"/>
    <property type="project" value="UniProtKB-UniRule"/>
</dbReference>
<dbReference type="CDD" id="cd00349">
    <property type="entry name" value="Ribosomal_L11"/>
    <property type="match status" value="1"/>
</dbReference>
<dbReference type="FunFam" id="1.10.10.250:FF:000001">
    <property type="entry name" value="50S ribosomal protein L11"/>
    <property type="match status" value="1"/>
</dbReference>
<dbReference type="FunFam" id="3.30.1550.10:FF:000001">
    <property type="entry name" value="50S ribosomal protein L11"/>
    <property type="match status" value="1"/>
</dbReference>
<dbReference type="Gene3D" id="1.10.10.250">
    <property type="entry name" value="Ribosomal protein L11, C-terminal domain"/>
    <property type="match status" value="1"/>
</dbReference>
<dbReference type="Gene3D" id="3.30.1550.10">
    <property type="entry name" value="Ribosomal protein L11/L12, N-terminal domain"/>
    <property type="match status" value="1"/>
</dbReference>
<dbReference type="HAMAP" id="MF_00736">
    <property type="entry name" value="Ribosomal_uL11"/>
    <property type="match status" value="1"/>
</dbReference>
<dbReference type="InterPro" id="IPR000911">
    <property type="entry name" value="Ribosomal_uL11"/>
</dbReference>
<dbReference type="InterPro" id="IPR006519">
    <property type="entry name" value="Ribosomal_uL11_bac-typ"/>
</dbReference>
<dbReference type="InterPro" id="IPR020783">
    <property type="entry name" value="Ribosomal_uL11_C"/>
</dbReference>
<dbReference type="InterPro" id="IPR036769">
    <property type="entry name" value="Ribosomal_uL11_C_sf"/>
</dbReference>
<dbReference type="InterPro" id="IPR020785">
    <property type="entry name" value="Ribosomal_uL11_CS"/>
</dbReference>
<dbReference type="InterPro" id="IPR020784">
    <property type="entry name" value="Ribosomal_uL11_N"/>
</dbReference>
<dbReference type="InterPro" id="IPR036796">
    <property type="entry name" value="Ribosomal_uL11_N_sf"/>
</dbReference>
<dbReference type="NCBIfam" id="TIGR01632">
    <property type="entry name" value="L11_bact"/>
    <property type="match status" value="1"/>
</dbReference>
<dbReference type="PANTHER" id="PTHR11661">
    <property type="entry name" value="60S RIBOSOMAL PROTEIN L12"/>
    <property type="match status" value="1"/>
</dbReference>
<dbReference type="PANTHER" id="PTHR11661:SF1">
    <property type="entry name" value="LARGE RIBOSOMAL SUBUNIT PROTEIN UL11M"/>
    <property type="match status" value="1"/>
</dbReference>
<dbReference type="Pfam" id="PF00298">
    <property type="entry name" value="Ribosomal_L11"/>
    <property type="match status" value="1"/>
</dbReference>
<dbReference type="Pfam" id="PF03946">
    <property type="entry name" value="Ribosomal_L11_N"/>
    <property type="match status" value="1"/>
</dbReference>
<dbReference type="SMART" id="SM00649">
    <property type="entry name" value="RL11"/>
    <property type="match status" value="1"/>
</dbReference>
<dbReference type="SUPFAM" id="SSF54747">
    <property type="entry name" value="Ribosomal L11/L12e N-terminal domain"/>
    <property type="match status" value="1"/>
</dbReference>
<dbReference type="SUPFAM" id="SSF46906">
    <property type="entry name" value="Ribosomal protein L11, C-terminal domain"/>
    <property type="match status" value="1"/>
</dbReference>
<dbReference type="PROSITE" id="PS00359">
    <property type="entry name" value="RIBOSOMAL_L11"/>
    <property type="match status" value="1"/>
</dbReference>